<keyword id="KW-0067">ATP-binding</keyword>
<keyword id="KW-0436">Ligase</keyword>
<keyword id="KW-0547">Nucleotide-binding</keyword>
<keyword id="KW-1185">Reference proteome</keyword>
<reference key="1">
    <citation type="journal article" date="2009" name="J. Bacteriol.">
        <title>The complete genome sequence of Bacillus anthracis Ames 'Ancestor'.</title>
        <authorList>
            <person name="Ravel J."/>
            <person name="Jiang L."/>
            <person name="Stanley S.T."/>
            <person name="Wilson M.R."/>
            <person name="Decker R.S."/>
            <person name="Read T.D."/>
            <person name="Worsham P."/>
            <person name="Keim P.S."/>
            <person name="Salzberg S.L."/>
            <person name="Fraser-Liggett C.M."/>
            <person name="Rasko D.A."/>
        </authorList>
    </citation>
    <scope>NUCLEOTIDE SEQUENCE [LARGE SCALE GENOMIC DNA]</scope>
    <source>
        <strain>Ames ancestor</strain>
    </source>
</reference>
<reference key="2">
    <citation type="journal article" date="2004" name="Mol. Microbiol.">
        <title>Bacillus anthracis requires siderophore biosynthesis for growth in macrophages and mouse virulence.</title>
        <authorList>
            <person name="Cendrowski S."/>
            <person name="MacArthur W."/>
            <person name="Hanna P."/>
        </authorList>
    </citation>
    <scope>FUNCTION IN VIRULENCE</scope>
    <scope>DISRUPTION PHENOTYPE</scope>
    <scope>GENE NAME</scope>
    <source>
        <strain>Sterne</strain>
    </source>
</reference>
<reference key="3">
    <citation type="journal article" date="2006" name="Biochem. Biophys. Res. Commun.">
        <title>Siderophores of Bacillus anthracis, Bacillus cereus, and Bacillus thuringiensis.</title>
        <authorList>
            <person name="Wilson M.K."/>
            <person name="Abergel R.J."/>
            <person name="Raymond K.N."/>
            <person name="Arceneaux J.E."/>
            <person name="Byers B.R."/>
        </authorList>
    </citation>
    <scope>FUNCTION</scope>
    <scope>DISRUPTION PHENOTYPE</scope>
    <source>
        <strain>Sterne</strain>
    </source>
</reference>
<reference key="4">
    <citation type="journal article" date="2007" name="J. Bacteriol.">
        <title>Biosynthetic analysis of the petrobactin siderophore pathway from Bacillus anthracis.</title>
        <authorList>
            <person name="Lee J.Y."/>
            <person name="Janes B.K."/>
            <person name="Passalacqua K.D."/>
            <person name="Pfleger B.F."/>
            <person name="Bergman N.H."/>
            <person name="Liu H."/>
            <person name="Haakansson K."/>
            <person name="Somu R.V."/>
            <person name="Aldrich C.C."/>
            <person name="Cendrowski S."/>
            <person name="Hanna P.C."/>
            <person name="Sherman D.H."/>
        </authorList>
    </citation>
    <scope>FUNCTION</scope>
    <scope>PATHWAY</scope>
    <scope>DISRUPTION PHENOTYPE</scope>
    <source>
        <strain>Sterne</strain>
    </source>
</reference>
<reference key="5">
    <citation type="journal article" date="2007" name="J. Am. Chem. Soc.">
        <title>Enzymatic logic of anthrax stealth siderophore biosynthesis: AsbA catalyzes ATP-dependent condensation of citric acid and spermidine.</title>
        <authorList>
            <person name="Oves-Costales D."/>
            <person name="Kadi N."/>
            <person name="Fogg M.J."/>
            <person name="Song L."/>
            <person name="Wilson K.S."/>
            <person name="Challis G.L."/>
        </authorList>
    </citation>
    <scope>FUNCTION</scope>
    <scope>CATALYTIC ACTIVITY</scope>
    <source>
        <strain>Ames</strain>
    </source>
</reference>
<reference key="6">
    <citation type="journal article" date="2009" name="Chem. Commun. (Camb.)">
        <title>Enantioselective desymmetrisation of citric acid catalysed by the substrate-tolerant petrobactin biosynthetic enzyme AsbA.</title>
        <authorList>
            <person name="Oves-Costales D."/>
            <person name="Song L."/>
            <person name="Challis G.L."/>
        </authorList>
    </citation>
    <scope>FUNCTION</scope>
    <scope>CATALYTIC ACTIVITY</scope>
    <scope>BIOTECHNOLOGY</scope>
</reference>
<reference key="7">
    <citation type="journal article" date="2012" name="J. Biol. Chem.">
        <title>Functional and structural analysis of the siderophore synthetase AsbB through reconstitution of the petrobactin biosynthetic pathway from Bacillus anthracis.</title>
        <authorList>
            <person name="Nusca T.D."/>
            <person name="Kim Y."/>
            <person name="Maltseva N."/>
            <person name="Lee J.Y."/>
            <person name="Eschenfeldt W."/>
            <person name="Stols L."/>
            <person name="Schofield M.M."/>
            <person name="Scaglione J.B."/>
            <person name="Dixon S.D."/>
            <person name="Oves-Costales D."/>
            <person name="Challis G.L."/>
            <person name="Hanna P.C."/>
            <person name="Pfleger B.F."/>
            <person name="Joachimiak A."/>
            <person name="Sherman D.H."/>
        </authorList>
    </citation>
    <scope>FUNCTION</scope>
    <scope>CATALYTIC ACTIVITY</scope>
    <scope>BIOPHYSICOCHEMICAL PROPERTIES</scope>
    <scope>PATHWAY</scope>
    <source>
        <strain>Sterne</strain>
    </source>
</reference>
<reference key="8">
    <citation type="journal article" date="2016" name="Mol. Microbiol.">
        <title>Flying under the radar: The non-canonical biochemistry and molecular biology of petrobactin from Bacillus anthracis.</title>
        <authorList>
            <person name="Hagan A.K."/>
            <person name="Carlson P.E. Jr."/>
            <person name="Hanna P.C."/>
        </authorList>
    </citation>
    <scope>REVIEW</scope>
</reference>
<sequence length="602" mass="69937">MKHAKQIAEHATIQSFLNCYLRETGSGEWITEDKRIEDIFYHLFQRDTCSTYLCCRLSAQNITLYGEVIYKSPTDRHLFGEQFYYQMGDSNSVMKADYVTVITFLIKEMSINYGEGTNPAELMLRVIRSCQNIEEFTKERKEDTSALYGFHTSFIEAEQSLLFGHLTHPTPKSRQGILEWKSAMYSPELKGECQLHYFRAHKSIVNEKSLLLDSTTVILKEELRNDEMVSKEFISKYCNEDEYSLLPIHPLQAEWLLHQPYVQDWIEQGVLEYIGPTGKCYMATSSLRTLYHPDAKYMLKFSFPVKVTNSMRINKLKELESGLEGKAMLNTAIGEVLEKFPGFDFICDPAFITLNYGTQESGFEVIIRENPFYSEHADDATLIAGLVQDAIPGERTRLSNIIHRLADLESRSCEEVSLEWFRRYMNISLKPMVWMYLQYGVALEAHQQNSVVQLKDGYPVKYYFRDNQGFYFCNSMKEMLNNELAGIGERTGNLYDDYIVDERFRYYLIFNHMFGLINGFGTAGLIREEILLTELRTVLESFLPYNREPSTFLRELLEEDKLACKANLLTRFFDVDELSNPLEQAIYVQVQNPLVREVAVRS</sequence>
<name>ASBA_BACAN</name>
<dbReference type="EC" id="6.3.2.-" evidence="5 6 7"/>
<dbReference type="EMBL" id="AE017334">
    <property type="protein sequence ID" value="AAT31100.1"/>
    <property type="molecule type" value="Genomic_DNA"/>
</dbReference>
<dbReference type="RefSeq" id="WP_000679659.1">
    <property type="nucleotide sequence ID" value="NZ_WXXJ01000029.1"/>
</dbReference>
<dbReference type="SMR" id="A0A0F7RJ52"/>
<dbReference type="DNASU" id="1085941"/>
<dbReference type="GeneID" id="45021903"/>
<dbReference type="KEGG" id="bar:GBAA_1981"/>
<dbReference type="PATRIC" id="fig|1392.230.peg.1941"/>
<dbReference type="HOGENOM" id="CLU_018283_0_0_9"/>
<dbReference type="OMA" id="TGWHRFG"/>
<dbReference type="OrthoDB" id="2989563at2"/>
<dbReference type="UniPathway" id="UPA01005"/>
<dbReference type="Proteomes" id="UP000000594">
    <property type="component" value="Chromosome"/>
</dbReference>
<dbReference type="GO" id="GO:0016881">
    <property type="term" value="F:acid-amino acid ligase activity"/>
    <property type="evidence" value="ECO:0007669"/>
    <property type="project" value="UniProtKB-ARBA"/>
</dbReference>
<dbReference type="GO" id="GO:0005524">
    <property type="term" value="F:ATP binding"/>
    <property type="evidence" value="ECO:0007669"/>
    <property type="project" value="UniProtKB-KW"/>
</dbReference>
<dbReference type="GO" id="GO:0019290">
    <property type="term" value="P:siderophore biosynthetic process"/>
    <property type="evidence" value="ECO:0007669"/>
    <property type="project" value="InterPro"/>
</dbReference>
<dbReference type="FunFam" id="1.10.510.40:FF:000002">
    <property type="entry name" value="IucA/IucC family siderophore biosynthesis protein"/>
    <property type="match status" value="1"/>
</dbReference>
<dbReference type="Gene3D" id="1.10.510.40">
    <property type="match status" value="1"/>
</dbReference>
<dbReference type="InterPro" id="IPR007310">
    <property type="entry name" value="Aerobactin_biosyn_IucA/IucC_N"/>
</dbReference>
<dbReference type="InterPro" id="IPR022770">
    <property type="entry name" value="IucA/IucC-like_C"/>
</dbReference>
<dbReference type="InterPro" id="IPR037455">
    <property type="entry name" value="LucA/IucC-like"/>
</dbReference>
<dbReference type="PANTHER" id="PTHR34384">
    <property type="entry name" value="L-2,3-DIAMINOPROPANOATE--CITRATE LIGASE"/>
    <property type="match status" value="1"/>
</dbReference>
<dbReference type="PANTHER" id="PTHR34384:SF5">
    <property type="entry name" value="L-2,3-DIAMINOPROPANOATE--CITRATE LIGASE"/>
    <property type="match status" value="1"/>
</dbReference>
<dbReference type="Pfam" id="PF06276">
    <property type="entry name" value="FhuF"/>
    <property type="match status" value="1"/>
</dbReference>
<dbReference type="Pfam" id="PF04183">
    <property type="entry name" value="IucA_IucC"/>
    <property type="match status" value="1"/>
</dbReference>
<gene>
    <name evidence="8" type="primary">asbA</name>
    <name evidence="10" type="ordered locus">GBAA_1981</name>
</gene>
<comment type="function">
    <text evidence="2 3 4 5 6 7">Involved in the biosynthesis of petrobactin, a catecholate siderophore that functions in both iron acquisition and virulence (PubMed:16875672, PubMed:17189355, PubMed:22408253). Catalyzes the ATP-dependent condensation of citric acid and spermidine to form N(8)-citryl-spermidine (PubMed:17579415, PubMed:19259597, PubMed:22408253). It can also catalyze the condensation of several di- and triamine analogs of spermidine with citric acid and the condensation of the citric acid analog tricarballylic acid with spermidine (PubMed:19259597). Required for growth in iron-depleted medium and for full virulence in a mouse model of infection (PubMed:14756782).</text>
</comment>
<comment type="catalytic activity">
    <reaction evidence="5 6 7">
        <text>spermidine + citrate + ATP = N(8)-citryl-spermidine + AMP + diphosphate + H(+)</text>
        <dbReference type="Rhea" id="RHEA:63808"/>
        <dbReference type="ChEBI" id="CHEBI:15378"/>
        <dbReference type="ChEBI" id="CHEBI:16947"/>
        <dbReference type="ChEBI" id="CHEBI:30616"/>
        <dbReference type="ChEBI" id="CHEBI:33019"/>
        <dbReference type="ChEBI" id="CHEBI:57834"/>
        <dbReference type="ChEBI" id="CHEBI:149586"/>
        <dbReference type="ChEBI" id="CHEBI:456215"/>
    </reaction>
</comment>
<comment type="biophysicochemical properties">
    <kinetics>
        <KM evidence="7">5.65 mM for citric acid</KM>
        <text evidence="7">kcat is 0.89 sec(-1).</text>
    </kinetics>
</comment>
<comment type="pathway">
    <text evidence="4 7">Siderophore biosynthesis; petrobactin biosynthesis.</text>
</comment>
<comment type="disruption phenotype">
    <text evidence="2 3 4">Deletion of the gene leads to a decrease in siderophore production during iron-depleted growth and attenuates growth (PubMed:14756782). The deletion mutant cannot produce petrobactin on iron-depleted medium (PubMed:16875672, PubMed:17189355). Mutant produces the petrobactin precursor 3,4-dihydroxybenzoyl (3,4-DHB) and bacillibactin (PubMed:16875672). The deletion mutant is severely attenuated for growth in macrophages and virulence in mice (PubMed:14756782). In vitro analysis show that mutants grow to a very limited extent as vegetative cells in iron-depleted medium but are not able to outgrow from spores under the same culture conditions (PubMed:17189355).</text>
</comment>
<comment type="biotechnology">
    <text evidence="6">The ability of the enzyme to catalyze condensation of citric acid with several di- and triamine analogs of spermidine suggests that it may be a versatile biocatalyst for the preparation of highly enantiomerically-enriched citrate derivatives via a novel type of desymmetrisation process.</text>
</comment>
<comment type="similarity">
    <text evidence="9">Belongs to the IucA/IucC family.</text>
</comment>
<feature type="chain" id="PRO_0000450623" description="Spermidine-citrate ligase">
    <location>
        <begin position="1"/>
        <end position="602"/>
    </location>
</feature>
<feature type="binding site" evidence="1">
    <location>
        <begin position="286"/>
        <end position="288"/>
    </location>
    <ligand>
        <name>ATP</name>
        <dbReference type="ChEBI" id="CHEBI:30616"/>
    </ligand>
</feature>
<feature type="binding site" evidence="1">
    <location>
        <position position="300"/>
    </location>
    <ligand>
        <name>ATP</name>
        <dbReference type="ChEBI" id="CHEBI:30616"/>
    </ligand>
</feature>
<feature type="binding site" evidence="1">
    <location>
        <position position="312"/>
    </location>
    <ligand>
        <name>ATP</name>
        <dbReference type="ChEBI" id="CHEBI:30616"/>
    </ligand>
</feature>
<protein>
    <recommendedName>
        <fullName evidence="9">Spermidine-citrate ligase</fullName>
        <ecNumber evidence="5 6 7">6.3.2.-</ecNumber>
    </recommendedName>
    <alternativeName>
        <fullName evidence="9">Petrobactin biosynthesis protein AsbA</fullName>
    </alternativeName>
</protein>
<accession>A0A0F7RJ52</accession>
<accession>E9QVX2</accession>
<accession>E9QVX3</accession>
<accession>Q6HZY6</accession>
<accession>Q6KTW5</accession>
<accession>Q81RQ9</accession>
<organism>
    <name type="scientific">Bacillus anthracis</name>
    <dbReference type="NCBI Taxonomy" id="1392"/>
    <lineage>
        <taxon>Bacteria</taxon>
        <taxon>Bacillati</taxon>
        <taxon>Bacillota</taxon>
        <taxon>Bacilli</taxon>
        <taxon>Bacillales</taxon>
        <taxon>Bacillaceae</taxon>
        <taxon>Bacillus</taxon>
        <taxon>Bacillus cereus group</taxon>
    </lineage>
</organism>
<proteinExistence type="evidence at protein level"/>
<evidence type="ECO:0000250" key="1">
    <source>
        <dbReference type="UniProtKB" id="Q81RQ8"/>
    </source>
</evidence>
<evidence type="ECO:0000269" key="2">
    <source>
    </source>
</evidence>
<evidence type="ECO:0000269" key="3">
    <source>
    </source>
</evidence>
<evidence type="ECO:0000269" key="4">
    <source>
    </source>
</evidence>
<evidence type="ECO:0000269" key="5">
    <source>
    </source>
</evidence>
<evidence type="ECO:0000269" key="6">
    <source>
    </source>
</evidence>
<evidence type="ECO:0000269" key="7">
    <source>
    </source>
</evidence>
<evidence type="ECO:0000303" key="8">
    <source>
    </source>
</evidence>
<evidence type="ECO:0000305" key="9"/>
<evidence type="ECO:0000312" key="10">
    <source>
        <dbReference type="EMBL" id="AAT31100.1"/>
    </source>
</evidence>